<keyword id="KW-0963">Cytoplasm</keyword>
<keyword id="KW-0489">Methyltransferase</keyword>
<keyword id="KW-0698">rRNA processing</keyword>
<keyword id="KW-0949">S-adenosyl-L-methionine</keyword>
<keyword id="KW-0808">Transferase</keyword>
<reference key="1">
    <citation type="journal article" date="2009" name="PLoS ONE">
        <title>Salmonella paratyphi C: genetic divergence from Salmonella choleraesuis and pathogenic convergence with Salmonella typhi.</title>
        <authorList>
            <person name="Liu W.-Q."/>
            <person name="Feng Y."/>
            <person name="Wang Y."/>
            <person name="Zou Q.-H."/>
            <person name="Chen F."/>
            <person name="Guo J.-T."/>
            <person name="Peng Y.-H."/>
            <person name="Jin Y."/>
            <person name="Li Y.-G."/>
            <person name="Hu S.-N."/>
            <person name="Johnston R.N."/>
            <person name="Liu G.-R."/>
            <person name="Liu S.-L."/>
        </authorList>
    </citation>
    <scope>NUCLEOTIDE SEQUENCE [LARGE SCALE GENOMIC DNA]</scope>
    <source>
        <strain>RKS4594</strain>
    </source>
</reference>
<feature type="chain" id="PRO_1000185321" description="Ribosomal RNA large subunit methyltransferase M">
    <location>
        <begin position="1"/>
        <end position="366"/>
    </location>
</feature>
<feature type="active site" description="Proton acceptor" evidence="1">
    <location>
        <position position="306"/>
    </location>
</feature>
<feature type="binding site" evidence="1">
    <location>
        <position position="188"/>
    </location>
    <ligand>
        <name>S-adenosyl-L-methionine</name>
        <dbReference type="ChEBI" id="CHEBI:59789"/>
    </ligand>
</feature>
<feature type="binding site" evidence="1">
    <location>
        <begin position="221"/>
        <end position="224"/>
    </location>
    <ligand>
        <name>S-adenosyl-L-methionine</name>
        <dbReference type="ChEBI" id="CHEBI:59789"/>
    </ligand>
</feature>
<feature type="binding site" evidence="1">
    <location>
        <position position="240"/>
    </location>
    <ligand>
        <name>S-adenosyl-L-methionine</name>
        <dbReference type="ChEBI" id="CHEBI:59789"/>
    </ligand>
</feature>
<feature type="binding site" evidence="1">
    <location>
        <position position="260"/>
    </location>
    <ligand>
        <name>S-adenosyl-L-methionine</name>
        <dbReference type="ChEBI" id="CHEBI:59789"/>
    </ligand>
</feature>
<feature type="binding site" evidence="1">
    <location>
        <position position="277"/>
    </location>
    <ligand>
        <name>S-adenosyl-L-methionine</name>
        <dbReference type="ChEBI" id="CHEBI:59789"/>
    </ligand>
</feature>
<protein>
    <recommendedName>
        <fullName evidence="1">Ribosomal RNA large subunit methyltransferase M</fullName>
        <ecNumber evidence="1">2.1.1.186</ecNumber>
    </recommendedName>
    <alternativeName>
        <fullName evidence="1">23S rRNA (cytidine2498-2'-O)-methyltransferase</fullName>
    </alternativeName>
    <alternativeName>
        <fullName evidence="1">23S rRNA 2'-O-ribose methyltransferase RlmM</fullName>
    </alternativeName>
</protein>
<dbReference type="EC" id="2.1.1.186" evidence="1"/>
<dbReference type="EMBL" id="CP000857">
    <property type="protein sequence ID" value="ACN47127.1"/>
    <property type="molecule type" value="Genomic_DNA"/>
</dbReference>
<dbReference type="RefSeq" id="WP_001045498.1">
    <property type="nucleotide sequence ID" value="NC_012125.1"/>
</dbReference>
<dbReference type="SMR" id="C0PXG9"/>
<dbReference type="KEGG" id="sei:SPC_3039"/>
<dbReference type="HOGENOM" id="CLU_043780_0_0_6"/>
<dbReference type="Proteomes" id="UP000001599">
    <property type="component" value="Chromosome"/>
</dbReference>
<dbReference type="GO" id="GO:0005737">
    <property type="term" value="C:cytoplasm"/>
    <property type="evidence" value="ECO:0007669"/>
    <property type="project" value="UniProtKB-SubCell"/>
</dbReference>
<dbReference type="GO" id="GO:0008757">
    <property type="term" value="F:S-adenosylmethionine-dependent methyltransferase activity"/>
    <property type="evidence" value="ECO:0007669"/>
    <property type="project" value="UniProtKB-UniRule"/>
</dbReference>
<dbReference type="GO" id="GO:0032259">
    <property type="term" value="P:methylation"/>
    <property type="evidence" value="ECO:0007669"/>
    <property type="project" value="UniProtKB-KW"/>
</dbReference>
<dbReference type="GO" id="GO:0006364">
    <property type="term" value="P:rRNA processing"/>
    <property type="evidence" value="ECO:0007669"/>
    <property type="project" value="UniProtKB-UniRule"/>
</dbReference>
<dbReference type="FunFam" id="3.30.2300.20:FF:000001">
    <property type="entry name" value="Ribosomal RNA large subunit methyltransferase M"/>
    <property type="match status" value="1"/>
</dbReference>
<dbReference type="FunFam" id="3.30.70.2810:FF:000001">
    <property type="entry name" value="Ribosomal RNA large subunit methyltransferase M"/>
    <property type="match status" value="1"/>
</dbReference>
<dbReference type="FunFam" id="3.40.50.150:FF:000020">
    <property type="entry name" value="Ribosomal RNA large subunit methyltransferase M"/>
    <property type="match status" value="1"/>
</dbReference>
<dbReference type="Gene3D" id="3.30.2300.20">
    <property type="match status" value="1"/>
</dbReference>
<dbReference type="Gene3D" id="3.30.70.2810">
    <property type="match status" value="1"/>
</dbReference>
<dbReference type="Gene3D" id="3.40.50.150">
    <property type="entry name" value="Vaccinia Virus protein VP39"/>
    <property type="match status" value="1"/>
</dbReference>
<dbReference type="HAMAP" id="MF_01551">
    <property type="entry name" value="23SrRNA_methyltr_M"/>
    <property type="match status" value="1"/>
</dbReference>
<dbReference type="InterPro" id="IPR040739">
    <property type="entry name" value="RlmM_FDX"/>
</dbReference>
<dbReference type="InterPro" id="IPR048646">
    <property type="entry name" value="RlmM_THUMP-like"/>
</dbReference>
<dbReference type="InterPro" id="IPR002877">
    <property type="entry name" value="RNA_MeTrfase_FtsJ_dom"/>
</dbReference>
<dbReference type="InterPro" id="IPR011224">
    <property type="entry name" value="rRNA_MeTrfase_M"/>
</dbReference>
<dbReference type="InterPro" id="IPR029063">
    <property type="entry name" value="SAM-dependent_MTases_sf"/>
</dbReference>
<dbReference type="NCBIfam" id="NF008734">
    <property type="entry name" value="PRK11760.1"/>
    <property type="match status" value="1"/>
</dbReference>
<dbReference type="PANTHER" id="PTHR37524">
    <property type="entry name" value="RIBOSOMAL RNA LARGE SUBUNIT METHYLTRANSFERASE M"/>
    <property type="match status" value="1"/>
</dbReference>
<dbReference type="PANTHER" id="PTHR37524:SF2">
    <property type="entry name" value="RIBOSOMAL RNA METHYLTRANSFERASE FTSJ DOMAIN-CONTAINING PROTEIN"/>
    <property type="match status" value="1"/>
</dbReference>
<dbReference type="Pfam" id="PF01728">
    <property type="entry name" value="FtsJ"/>
    <property type="match status" value="1"/>
</dbReference>
<dbReference type="Pfam" id="PF18125">
    <property type="entry name" value="RlmM_FDX"/>
    <property type="match status" value="1"/>
</dbReference>
<dbReference type="Pfam" id="PF21239">
    <property type="entry name" value="RLMM_N"/>
    <property type="match status" value="1"/>
</dbReference>
<dbReference type="PIRSF" id="PIRSF028774">
    <property type="entry name" value="UCP028774"/>
    <property type="match status" value="1"/>
</dbReference>
<dbReference type="SUPFAM" id="SSF53335">
    <property type="entry name" value="S-adenosyl-L-methionine-dependent methyltransferases"/>
    <property type="match status" value="1"/>
</dbReference>
<proteinExistence type="inferred from homology"/>
<comment type="function">
    <text evidence="1">Catalyzes the 2'-O-methylation at nucleotide C2498 in 23S rRNA.</text>
</comment>
<comment type="catalytic activity">
    <reaction evidence="1">
        <text>cytidine(2498) in 23S rRNA + S-adenosyl-L-methionine = 2'-O-methylcytidine(2498) in 23S rRNA + S-adenosyl-L-homocysteine + H(+)</text>
        <dbReference type="Rhea" id="RHEA:42788"/>
        <dbReference type="Rhea" id="RHEA-COMP:10244"/>
        <dbReference type="Rhea" id="RHEA-COMP:10245"/>
        <dbReference type="ChEBI" id="CHEBI:15378"/>
        <dbReference type="ChEBI" id="CHEBI:57856"/>
        <dbReference type="ChEBI" id="CHEBI:59789"/>
        <dbReference type="ChEBI" id="CHEBI:74495"/>
        <dbReference type="ChEBI" id="CHEBI:82748"/>
        <dbReference type="EC" id="2.1.1.186"/>
    </reaction>
</comment>
<comment type="subunit">
    <text evidence="1">Monomer.</text>
</comment>
<comment type="subcellular location">
    <subcellularLocation>
        <location evidence="1">Cytoplasm</location>
    </subcellularLocation>
</comment>
<comment type="similarity">
    <text evidence="1">Belongs to the class I-like SAM-binding methyltransferase superfamily. RNA methyltransferase RlmE family. RlmM subfamily.</text>
</comment>
<accession>C0PXG9</accession>
<evidence type="ECO:0000255" key="1">
    <source>
        <dbReference type="HAMAP-Rule" id="MF_01551"/>
    </source>
</evidence>
<organism>
    <name type="scientific">Salmonella paratyphi C (strain RKS4594)</name>
    <dbReference type="NCBI Taxonomy" id="476213"/>
    <lineage>
        <taxon>Bacteria</taxon>
        <taxon>Pseudomonadati</taxon>
        <taxon>Pseudomonadota</taxon>
        <taxon>Gammaproteobacteria</taxon>
        <taxon>Enterobacterales</taxon>
        <taxon>Enterobacteriaceae</taxon>
        <taxon>Salmonella</taxon>
    </lineage>
</organism>
<name>RLMM_SALPC</name>
<sequence length="366" mass="42048">MNKVVLLCRPGFEKECAAEITDKAGKREIFGFARVKENAGYVIYECYQPEDGEKLISELPFSSLIFARQWFVVGELLQHLPPEDRITPIVGMLQGVVEKGGELRVEVADTNESKELMKFCRKFTVPLRAALRDVGVLTNYETPKRPVVHVFFIAPGCCYTGYSFAHNNSPFYMGIPRLKFPSDAPSRSTLKLEEALHVFIPEDEWDERLANGMYAVDLGACPGGWTYQLVKRNMWVYSVDNGPMAQSLMDTGQVTWLREDGFRYRPNRNNISWMVCDMVEKPAKVTALMAQWLVNGWCRETIFNLKLPMKKRYEEVSHNLAYLQAQLDEHGVNAQIQARQLYHDREEVTVHVRRLWAAVGGRRDER</sequence>
<gene>
    <name evidence="1" type="primary">rlmM</name>
    <name type="ordered locus">SPC_3039</name>
</gene>